<proteinExistence type="evidence at transcript level"/>
<organism>
    <name type="scientific">Vaccinia virus (strain Western Reserve)</name>
    <name type="common">VACV</name>
    <name type="synonym">Vaccinia virus (strain WR)</name>
    <dbReference type="NCBI Taxonomy" id="10254"/>
    <lineage>
        <taxon>Viruses</taxon>
        <taxon>Varidnaviria</taxon>
        <taxon>Bamfordvirae</taxon>
        <taxon>Nucleocytoviricota</taxon>
        <taxon>Pokkesviricetes</taxon>
        <taxon>Chitovirales</taxon>
        <taxon>Poxviridae</taxon>
        <taxon>Chordopoxvirinae</taxon>
        <taxon>Orthopoxvirus</taxon>
        <taxon>Vaccinia virus</taxon>
    </lineage>
</organism>
<reference key="1">
    <citation type="journal article" date="1988" name="J. Gen. Virol.">
        <title>Non-essential genes in the vaccinia virus HindIII K fragment: a gene related to serine protease inhibitors and a gene related to the 37K vaccinia virus major envelope antigen.</title>
        <authorList>
            <person name="Boursnell M.E.G."/>
            <person name="Foulds I.J."/>
            <person name="Campbell J.I."/>
            <person name="Binns M.M."/>
        </authorList>
    </citation>
    <scope>NUCLEOTIDE SEQUENCE [GENOMIC DNA]</scope>
</reference>
<reference key="2">
    <citation type="submission" date="2003-02" db="EMBL/GenBank/DDBJ databases">
        <title>Sequencing of the coding region of Vaccinia-WR to an average 9-fold redundancy and an error rate of 0.16/10kb.</title>
        <authorList>
            <person name="Esposito J.J."/>
            <person name="Frace A.M."/>
            <person name="Sammons S.A."/>
            <person name="Olsen-Rasmussen M."/>
            <person name="Osborne J."/>
            <person name="Wohlhueter R."/>
        </authorList>
    </citation>
    <scope>NUCLEOTIDE SEQUENCE [LARGE SCALE GENOMIC DNA]</scope>
</reference>
<reference key="3">
    <citation type="journal article" date="1988" name="J. Mol. Biol.">
        <title>Molecular cloning and sequence of the concatemer junction from vaccinia virus replicative DNA. Viral nuclease cleavage sites in cruciform structures.</title>
        <authorList>
            <person name="Merchlinsky M."/>
            <person name="Garon C.F."/>
            <person name="Moss B."/>
        </authorList>
    </citation>
    <scope>FUNCTION</scope>
    <scope>SUBCELLULAR LOCATION</scope>
</reference>
<reference key="4">
    <citation type="journal article" date="2005" name="J. Virol.">
        <title>Vaccinia virus nicking-joining enzyme is encoded by K4L (VACWR035).</title>
        <authorList>
            <person name="Eckert D."/>
            <person name="Williams O."/>
            <person name="Meseda C.A."/>
            <person name="Merchlinsky M."/>
        </authorList>
    </citation>
    <scope>FUNCTION</scope>
</reference>
<reference key="5">
    <citation type="journal article" date="2015" name="J. Virol.">
        <title>Deciphering poxvirus gene expression by RNA sequencing and ribosome profiling.</title>
        <authorList>
            <person name="Yang Z."/>
            <person name="Cao S."/>
            <person name="Martens C.A."/>
            <person name="Porcella S.F."/>
            <person name="Xie Z."/>
            <person name="Ma M."/>
            <person name="Shen B."/>
            <person name="Moss B."/>
        </authorList>
    </citation>
    <scope>INDUCTION</scope>
</reference>
<feature type="chain" id="PRO_0000099602" description="Virion nicking-joining enzyme">
    <location>
        <begin position="1"/>
        <end position="424"/>
    </location>
</feature>
<feature type="domain" description="PLD phosphodiesterase 1" evidence="1">
    <location>
        <begin position="110"/>
        <end position="137"/>
    </location>
</feature>
<feature type="domain" description="PLD phosphodiesterase 2" evidence="1">
    <location>
        <begin position="320"/>
        <end position="346"/>
    </location>
</feature>
<keyword id="KW-0255">Endonuclease</keyword>
<keyword id="KW-0378">Hydrolase</keyword>
<keyword id="KW-0540">Nuclease</keyword>
<keyword id="KW-1185">Reference proteome</keyword>
<keyword id="KW-0677">Repeat</keyword>
<keyword id="KW-0946">Virion</keyword>
<evidence type="ECO:0000255" key="1">
    <source>
        <dbReference type="PROSITE-ProRule" id="PRU00153"/>
    </source>
</evidence>
<evidence type="ECO:0000269" key="2">
    <source>
    </source>
</evidence>
<evidence type="ECO:0000269" key="3">
    <source>
    </source>
</evidence>
<evidence type="ECO:0000269" key="4">
    <source>
    </source>
</evidence>
<evidence type="ECO:0000305" key="5"/>
<evidence type="ECO:0000305" key="6">
    <source>
    </source>
</evidence>
<protein>
    <recommendedName>
        <fullName>Virion nicking-joining enzyme</fullName>
    </recommendedName>
    <alternativeName>
        <fullName>Phospholipase-D-like protein K4</fullName>
    </alternativeName>
</protein>
<accession>P18377</accession>
<accession>Q76ZX6</accession>
<comment type="function">
    <text evidence="2 4">DNA nicking enzyme that cleaves extruded cruciform DNA at its tip (PubMed:16306579). Probably nicks viral hairpins.</text>
</comment>
<comment type="subcellular location">
    <subcellularLocation>
        <location>Virion</location>
    </subcellularLocation>
    <text evidence="4">Virion core.</text>
</comment>
<comment type="induction">
    <text evidence="3">Expressed in the intermediate phase of the viral replicative cycle.</text>
</comment>
<comment type="similarity">
    <text evidence="5">Belongs to the orthopoxvirus OPG042 family.</text>
</comment>
<comment type="caution">
    <text evidence="6">Assays designed to demonstrate phospholipase D activity failed to show activity.</text>
</comment>
<dbReference type="EMBL" id="D00382">
    <property type="protein sequence ID" value="BAA00289.1"/>
    <property type="molecule type" value="Genomic_DNA"/>
</dbReference>
<dbReference type="EMBL" id="AY243312">
    <property type="protein sequence ID" value="AAO89314.1"/>
    <property type="molecule type" value="Genomic_DNA"/>
</dbReference>
<dbReference type="PIR" id="JS0213">
    <property type="entry name" value="WMVZK3"/>
</dbReference>
<dbReference type="SMR" id="P18377"/>
<dbReference type="DNASU" id="3707650"/>
<dbReference type="KEGG" id="vg:3707650"/>
<dbReference type="Proteomes" id="UP000000344">
    <property type="component" value="Genome"/>
</dbReference>
<dbReference type="GO" id="GO:0044423">
    <property type="term" value="C:virion component"/>
    <property type="evidence" value="ECO:0007669"/>
    <property type="project" value="UniProtKB-KW"/>
</dbReference>
<dbReference type="GO" id="GO:0004519">
    <property type="term" value="F:endonuclease activity"/>
    <property type="evidence" value="ECO:0007669"/>
    <property type="project" value="UniProtKB-KW"/>
</dbReference>
<dbReference type="CDD" id="cd09106">
    <property type="entry name" value="PLDc_vPLD3_4_5_like_1"/>
    <property type="match status" value="1"/>
</dbReference>
<dbReference type="CDD" id="cd09107">
    <property type="entry name" value="PLDc_vPLD3_4_5_like_2"/>
    <property type="match status" value="1"/>
</dbReference>
<dbReference type="Gene3D" id="3.30.870.10">
    <property type="entry name" value="Endonuclease Chain A"/>
    <property type="match status" value="2"/>
</dbReference>
<dbReference type="InterPro" id="IPR050874">
    <property type="entry name" value="Diverse_PLD-related"/>
</dbReference>
<dbReference type="InterPro" id="IPR032803">
    <property type="entry name" value="PLDc_3"/>
</dbReference>
<dbReference type="InterPro" id="IPR001736">
    <property type="entry name" value="PLipase_D/transphosphatidylase"/>
</dbReference>
<dbReference type="PANTHER" id="PTHR10185:SF16">
    <property type="entry name" value="5'-3' EXONUCLEASE PLD3"/>
    <property type="match status" value="1"/>
</dbReference>
<dbReference type="PANTHER" id="PTHR10185">
    <property type="entry name" value="PHOSPHOLIPASE D - RELATED"/>
    <property type="match status" value="1"/>
</dbReference>
<dbReference type="Pfam" id="PF00614">
    <property type="entry name" value="PLDc"/>
    <property type="match status" value="1"/>
</dbReference>
<dbReference type="Pfam" id="PF13918">
    <property type="entry name" value="PLDc_3"/>
    <property type="match status" value="1"/>
</dbReference>
<dbReference type="SMART" id="SM00155">
    <property type="entry name" value="PLDc"/>
    <property type="match status" value="2"/>
</dbReference>
<dbReference type="SUPFAM" id="SSF56024">
    <property type="entry name" value="Phospholipase D/nuclease"/>
    <property type="match status" value="2"/>
</dbReference>
<dbReference type="PROSITE" id="PS50035">
    <property type="entry name" value="PLD"/>
    <property type="match status" value="2"/>
</dbReference>
<sequence length="424" mass="48873">MNPDNTIAVITETIPIGMQFDKVYLSTFNMWREILSNTTKTLDISSFYWSLSDEVGTNFGTIILNKIVQLPKRGVRVRVAVNKSNKPLKDVERLQMAGVEVRYIDITNILGGVLHTKFWISDNTHIYLGSANMDWRSLTQVKELGIAIFNNRNLAADLTQIFEVYWYLGVNNLPYNWKNFYPSYYNTDHPLSINVSGVPHSVFIASAPQQLCTMERTNDLTALLSCIRNASKFVYVSVMNFIPIIYSKAGNILFWPYIEDELRRAAIDRQVSVKLLISCWQRSSFIMRNFLRSIAMLKSKNINIEVKLFIVPDADPPIPYSRVNHAKYMVTDKTAYIGTSNWTGNYFTDTCGASINITPDDGLGLRQQLEDIFMRDWNSKYSYELYDTSPTKRCRLLKNMKQCTNDIYCDEIQPEKEIPEYSLE</sequence>
<name>PG042_VACCW</name>
<organismHost>
    <name type="scientific">Bos taurus</name>
    <name type="common">Bovine</name>
    <dbReference type="NCBI Taxonomy" id="9913"/>
</organismHost>
<gene>
    <name type="primary">OPG042</name>
    <name type="ordered locus">VACWR035</name>
    <name type="ORF">K3</name>
</gene>